<keyword id="KW-0119">Carbohydrate metabolism</keyword>
<keyword id="KW-0256">Endoplasmic reticulum</keyword>
<keyword id="KW-0325">Glycoprotein</keyword>
<keyword id="KW-0472">Membrane</keyword>
<keyword id="KW-1185">Reference proteome</keyword>
<keyword id="KW-0732">Signal</keyword>
<keyword id="KW-0812">Transmembrane</keyword>
<keyword id="KW-1133">Transmembrane helix</keyword>
<protein>
    <recommendedName>
        <fullName evidence="1">Malectin-B</fullName>
    </recommendedName>
</protein>
<name>MLECB_XENLA</name>
<sequence>MLSIRTVLGPLAAILLTVIGPFGAHGSGLADKVMWAVNAGGESHVDVHGIHYRKDPLEGRVGRASDYGMKLPILRSNPEDQVLYQTERYNEDSFGYDIPIKEEGEYVIVLKFAEVYFAQSQQKVFDIRVNGHTVVKDLDIFDRVGHSTAHDEIIPISIKKGKLSVQGEVSTFTGKLSVEFVKGYYDNPKVCALYIMKGTADDVPQLQPHPGLEKKEEEEEEEEEEGSPSKKQSNKNRVQSGPRTPNPYASDNSSLMFPILVAFGVFIPTLFCLCRL</sequence>
<accession>Q8AVF4</accession>
<gene>
    <name evidence="1" type="primary">mlec-b</name>
</gene>
<reference evidence="5" key="1">
    <citation type="submission" date="2003-01" db="EMBL/GenBank/DDBJ databases">
        <authorList>
            <consortium name="NIH - Xenopus Gene Collection (XGC) project"/>
        </authorList>
    </citation>
    <scope>NUCLEOTIDE SEQUENCE [LARGE SCALE MRNA]</scope>
    <source>
        <tissue evidence="5">Embryo</tissue>
    </source>
</reference>
<feature type="signal peptide" evidence="2">
    <location>
        <begin position="1"/>
        <end position="26"/>
    </location>
</feature>
<feature type="chain" id="PRO_0000358591" description="Malectin-B" evidence="2">
    <location>
        <begin position="27"/>
        <end position="276"/>
    </location>
</feature>
<feature type="topological domain" description="Lumenal" evidence="2">
    <location>
        <begin position="27"/>
        <end position="253"/>
    </location>
</feature>
<feature type="transmembrane region" description="Helical" evidence="2">
    <location>
        <begin position="254"/>
        <end position="274"/>
    </location>
</feature>
<feature type="topological domain" description="Cytoplasmic" evidence="2">
    <location>
        <begin position="275"/>
        <end position="276"/>
    </location>
</feature>
<feature type="region of interest" description="Disordered" evidence="3">
    <location>
        <begin position="202"/>
        <end position="249"/>
    </location>
</feature>
<feature type="compositionally biased region" description="Acidic residues" evidence="3">
    <location>
        <begin position="216"/>
        <end position="226"/>
    </location>
</feature>
<feature type="compositionally biased region" description="Polar residues" evidence="3">
    <location>
        <begin position="229"/>
        <end position="249"/>
    </location>
</feature>
<feature type="binding site" evidence="1">
    <location>
        <position position="67"/>
    </location>
    <ligand>
        <name>a carbohydrate</name>
        <dbReference type="ChEBI" id="CHEBI:16646"/>
    </ligand>
</feature>
<feature type="binding site" evidence="1">
    <location>
        <position position="89"/>
    </location>
    <ligand>
        <name>a carbohydrate</name>
        <dbReference type="ChEBI" id="CHEBI:16646"/>
    </ligand>
</feature>
<feature type="binding site" evidence="1">
    <location>
        <position position="116"/>
    </location>
    <ligand>
        <name>a carbohydrate</name>
        <dbReference type="ChEBI" id="CHEBI:16646"/>
    </ligand>
</feature>
<feature type="binding site" evidence="1">
    <location>
        <position position="117"/>
    </location>
    <ligand>
        <name>a carbohydrate</name>
        <dbReference type="ChEBI" id="CHEBI:16646"/>
    </ligand>
</feature>
<feature type="binding site" evidence="1">
    <location>
        <position position="186"/>
    </location>
    <ligand>
        <name>a carbohydrate</name>
        <dbReference type="ChEBI" id="CHEBI:16646"/>
    </ligand>
</feature>
<feature type="glycosylation site" description="N-linked (GlcNAc...) asparagine" evidence="2">
    <location>
        <position position="252"/>
    </location>
</feature>
<proteinExistence type="evidence at transcript level"/>
<evidence type="ECO:0000250" key="1">
    <source>
        <dbReference type="UniProtKB" id="Q6INX3"/>
    </source>
</evidence>
<evidence type="ECO:0000255" key="2"/>
<evidence type="ECO:0000256" key="3">
    <source>
        <dbReference type="SAM" id="MobiDB-lite"/>
    </source>
</evidence>
<evidence type="ECO:0000305" key="4"/>
<evidence type="ECO:0000312" key="5">
    <source>
        <dbReference type="EMBL" id="AAH42341.1"/>
    </source>
</evidence>
<comment type="function">
    <text evidence="1">Carbohydrate-binding protein with a strong ligand preference for Glc2-N-glycan. May play a role in the early steps of protein N-glycosylation. Can bind di- or higher oligomers but not monomers of glucose, including maltose, maltotriose, maltotetraose, maltoheptaose, nigerose, kojibose, cellobiose and isomaltose, although based on their subcellular locations, these are unlikely to all be physiological ligands (By similarity).</text>
</comment>
<comment type="subcellular location">
    <subcellularLocation>
        <location evidence="1 2">Endoplasmic reticulum membrane</location>
        <topology evidence="1 2">Single-pass type I membrane protein</topology>
    </subcellularLocation>
</comment>
<comment type="similarity">
    <text evidence="4">Belongs to the malectin family.</text>
</comment>
<comment type="sequence caution" evidence="4">
    <conflict type="frameshift">
        <sequence resource="EMBL-CDS" id="AAH42341"/>
    </conflict>
</comment>
<organism>
    <name type="scientific">Xenopus laevis</name>
    <name type="common">African clawed frog</name>
    <dbReference type="NCBI Taxonomy" id="8355"/>
    <lineage>
        <taxon>Eukaryota</taxon>
        <taxon>Metazoa</taxon>
        <taxon>Chordata</taxon>
        <taxon>Craniata</taxon>
        <taxon>Vertebrata</taxon>
        <taxon>Euteleostomi</taxon>
        <taxon>Amphibia</taxon>
        <taxon>Batrachia</taxon>
        <taxon>Anura</taxon>
        <taxon>Pipoidea</taxon>
        <taxon>Pipidae</taxon>
        <taxon>Xenopodinae</taxon>
        <taxon>Xenopus</taxon>
        <taxon>Xenopus</taxon>
    </lineage>
</organism>
<dbReference type="EMBL" id="BC042341">
    <property type="protein sequence ID" value="AAH42341.1"/>
    <property type="status" value="ALT_FRAME"/>
    <property type="molecule type" value="mRNA"/>
</dbReference>
<dbReference type="RefSeq" id="NP_001080532.1">
    <property type="nucleotide sequence ID" value="NM_001087063.1"/>
</dbReference>
<dbReference type="RefSeq" id="XP_018124265.1">
    <property type="nucleotide sequence ID" value="XM_018268776.1"/>
</dbReference>
<dbReference type="SMR" id="Q8AVF4"/>
<dbReference type="GlyCosmos" id="Q8AVF4">
    <property type="glycosylation" value="1 site, No reported glycans"/>
</dbReference>
<dbReference type="DNASU" id="380224"/>
<dbReference type="GeneID" id="380224"/>
<dbReference type="KEGG" id="xla:380224"/>
<dbReference type="AGR" id="Xenbase:XB-GENE-6253921"/>
<dbReference type="CTD" id="380224"/>
<dbReference type="Xenbase" id="XB-GENE-6253921">
    <property type="gene designation" value="mlec.L"/>
</dbReference>
<dbReference type="OMA" id="VLAEHCW"/>
<dbReference type="OrthoDB" id="10013439at2759"/>
<dbReference type="Proteomes" id="UP000186698">
    <property type="component" value="Chromosome 1L"/>
</dbReference>
<dbReference type="Bgee" id="380224">
    <property type="expression patterns" value="Expressed in pancreas and 19 other cell types or tissues"/>
</dbReference>
<dbReference type="GO" id="GO:0005783">
    <property type="term" value="C:endoplasmic reticulum"/>
    <property type="evidence" value="ECO:0000250"/>
    <property type="project" value="UniProtKB"/>
</dbReference>
<dbReference type="GO" id="GO:0005789">
    <property type="term" value="C:endoplasmic reticulum membrane"/>
    <property type="evidence" value="ECO:0007669"/>
    <property type="project" value="UniProtKB-SubCell"/>
</dbReference>
<dbReference type="GO" id="GO:0016020">
    <property type="term" value="C:membrane"/>
    <property type="evidence" value="ECO:0000318"/>
    <property type="project" value="GO_Central"/>
</dbReference>
<dbReference type="GO" id="GO:0030246">
    <property type="term" value="F:carbohydrate binding"/>
    <property type="evidence" value="ECO:0000250"/>
    <property type="project" value="UniProtKB"/>
</dbReference>
<dbReference type="FunFam" id="2.60.120.430:FF:000006">
    <property type="entry name" value="Malectin"/>
    <property type="match status" value="1"/>
</dbReference>
<dbReference type="Gene3D" id="2.60.120.430">
    <property type="entry name" value="Galactose-binding lectin"/>
    <property type="match status" value="1"/>
</dbReference>
<dbReference type="InterPro" id="IPR021720">
    <property type="entry name" value="Malectin_dom"/>
</dbReference>
<dbReference type="InterPro" id="IPR039155">
    <property type="entry name" value="MLEC"/>
</dbReference>
<dbReference type="PANTHER" id="PTHR13460">
    <property type="match status" value="1"/>
</dbReference>
<dbReference type="PANTHER" id="PTHR13460:SF0">
    <property type="entry name" value="MALECTIN"/>
    <property type="match status" value="1"/>
</dbReference>
<dbReference type="Pfam" id="PF11721">
    <property type="entry name" value="Malectin"/>
    <property type="match status" value="1"/>
</dbReference>